<reference key="1">
    <citation type="journal article" date="2004" name="Proc. Natl. Acad. Sci. U.S.A.">
        <title>Insights into the evolution of Yersinia pestis through whole-genome comparison with Yersinia pseudotuberculosis.</title>
        <authorList>
            <person name="Chain P.S.G."/>
            <person name="Carniel E."/>
            <person name="Larimer F.W."/>
            <person name="Lamerdin J."/>
            <person name="Stoutland P.O."/>
            <person name="Regala W.M."/>
            <person name="Georgescu A.M."/>
            <person name="Vergez L.M."/>
            <person name="Land M.L."/>
            <person name="Motin V.L."/>
            <person name="Brubaker R.R."/>
            <person name="Fowler J."/>
            <person name="Hinnebusch J."/>
            <person name="Marceau M."/>
            <person name="Medigue C."/>
            <person name="Simonet M."/>
            <person name="Chenal-Francisque V."/>
            <person name="Souza B."/>
            <person name="Dacheux D."/>
            <person name="Elliott J.M."/>
            <person name="Derbise A."/>
            <person name="Hauser L.J."/>
            <person name="Garcia E."/>
        </authorList>
    </citation>
    <scope>NUCLEOTIDE SEQUENCE [LARGE SCALE GENOMIC DNA]</scope>
    <source>
        <strain>IP32953</strain>
    </source>
</reference>
<name>NAGZ_YERPS</name>
<feature type="chain" id="PRO_0000234932" description="Beta-hexosaminidase">
    <location>
        <begin position="1"/>
        <end position="343"/>
    </location>
</feature>
<feature type="active site" description="Proton donor/acceptor" evidence="1">
    <location>
        <position position="176"/>
    </location>
</feature>
<feature type="active site" description="Nucleophile" evidence="1">
    <location>
        <position position="248"/>
    </location>
</feature>
<feature type="binding site" evidence="1">
    <location>
        <position position="62"/>
    </location>
    <ligand>
        <name>substrate</name>
    </ligand>
</feature>
<feature type="binding site" evidence="1">
    <location>
        <position position="70"/>
    </location>
    <ligand>
        <name>substrate</name>
    </ligand>
</feature>
<feature type="binding site" evidence="1">
    <location>
        <position position="133"/>
    </location>
    <ligand>
        <name>substrate</name>
    </ligand>
</feature>
<feature type="binding site" evidence="1">
    <location>
        <begin position="163"/>
        <end position="164"/>
    </location>
    <ligand>
        <name>substrate</name>
    </ligand>
</feature>
<feature type="site" description="Important for catalytic activity" evidence="1">
    <location>
        <position position="174"/>
    </location>
</feature>
<dbReference type="EC" id="3.2.1.52" evidence="1"/>
<dbReference type="EMBL" id="BX936398">
    <property type="protein sequence ID" value="CAH21687.1"/>
    <property type="molecule type" value="Genomic_DNA"/>
</dbReference>
<dbReference type="SMR" id="Q669N5"/>
<dbReference type="CAZy" id="GH3">
    <property type="family name" value="Glycoside Hydrolase Family 3"/>
</dbReference>
<dbReference type="KEGG" id="yps:YPTB2449"/>
<dbReference type="UniPathway" id="UPA00544"/>
<dbReference type="Proteomes" id="UP000001011">
    <property type="component" value="Chromosome"/>
</dbReference>
<dbReference type="GO" id="GO:0005737">
    <property type="term" value="C:cytoplasm"/>
    <property type="evidence" value="ECO:0007669"/>
    <property type="project" value="UniProtKB-SubCell"/>
</dbReference>
<dbReference type="GO" id="GO:0004563">
    <property type="term" value="F:beta-N-acetylhexosaminidase activity"/>
    <property type="evidence" value="ECO:0007669"/>
    <property type="project" value="UniProtKB-UniRule"/>
</dbReference>
<dbReference type="GO" id="GO:0005975">
    <property type="term" value="P:carbohydrate metabolic process"/>
    <property type="evidence" value="ECO:0007669"/>
    <property type="project" value="InterPro"/>
</dbReference>
<dbReference type="GO" id="GO:0051301">
    <property type="term" value="P:cell division"/>
    <property type="evidence" value="ECO:0007669"/>
    <property type="project" value="UniProtKB-KW"/>
</dbReference>
<dbReference type="GO" id="GO:0071555">
    <property type="term" value="P:cell wall organization"/>
    <property type="evidence" value="ECO:0007669"/>
    <property type="project" value="UniProtKB-KW"/>
</dbReference>
<dbReference type="GO" id="GO:0009252">
    <property type="term" value="P:peptidoglycan biosynthetic process"/>
    <property type="evidence" value="ECO:0007669"/>
    <property type="project" value="UniProtKB-KW"/>
</dbReference>
<dbReference type="GO" id="GO:0009254">
    <property type="term" value="P:peptidoglycan turnover"/>
    <property type="evidence" value="ECO:0007669"/>
    <property type="project" value="UniProtKB-UniRule"/>
</dbReference>
<dbReference type="GO" id="GO:0008360">
    <property type="term" value="P:regulation of cell shape"/>
    <property type="evidence" value="ECO:0007669"/>
    <property type="project" value="UniProtKB-KW"/>
</dbReference>
<dbReference type="FunFam" id="3.20.20.300:FF:000001">
    <property type="entry name" value="Beta-hexosaminidase"/>
    <property type="match status" value="1"/>
</dbReference>
<dbReference type="Gene3D" id="3.20.20.300">
    <property type="entry name" value="Glycoside hydrolase, family 3, N-terminal domain"/>
    <property type="match status" value="1"/>
</dbReference>
<dbReference type="HAMAP" id="MF_00364">
    <property type="entry name" value="NagZ"/>
    <property type="match status" value="1"/>
</dbReference>
<dbReference type="InterPro" id="IPR022956">
    <property type="entry name" value="Beta_hexosaminidase_bac"/>
</dbReference>
<dbReference type="InterPro" id="IPR019800">
    <property type="entry name" value="Glyco_hydro_3_AS"/>
</dbReference>
<dbReference type="InterPro" id="IPR001764">
    <property type="entry name" value="Glyco_hydro_3_N"/>
</dbReference>
<dbReference type="InterPro" id="IPR036962">
    <property type="entry name" value="Glyco_hydro_3_N_sf"/>
</dbReference>
<dbReference type="InterPro" id="IPR017853">
    <property type="entry name" value="Glycoside_hydrolase_SF"/>
</dbReference>
<dbReference type="InterPro" id="IPR050226">
    <property type="entry name" value="NagZ_Beta-hexosaminidase"/>
</dbReference>
<dbReference type="NCBIfam" id="NF003740">
    <property type="entry name" value="PRK05337.1"/>
    <property type="match status" value="1"/>
</dbReference>
<dbReference type="PANTHER" id="PTHR30480:SF13">
    <property type="entry name" value="BETA-HEXOSAMINIDASE"/>
    <property type="match status" value="1"/>
</dbReference>
<dbReference type="PANTHER" id="PTHR30480">
    <property type="entry name" value="BETA-HEXOSAMINIDASE-RELATED"/>
    <property type="match status" value="1"/>
</dbReference>
<dbReference type="Pfam" id="PF00933">
    <property type="entry name" value="Glyco_hydro_3"/>
    <property type="match status" value="1"/>
</dbReference>
<dbReference type="SUPFAM" id="SSF51445">
    <property type="entry name" value="(Trans)glycosidases"/>
    <property type="match status" value="1"/>
</dbReference>
<dbReference type="PROSITE" id="PS00775">
    <property type="entry name" value="GLYCOSYL_HYDROL_F3"/>
    <property type="match status" value="1"/>
</dbReference>
<keyword id="KW-0131">Cell cycle</keyword>
<keyword id="KW-0132">Cell division</keyword>
<keyword id="KW-0133">Cell shape</keyword>
<keyword id="KW-0961">Cell wall biogenesis/degradation</keyword>
<keyword id="KW-0963">Cytoplasm</keyword>
<keyword id="KW-0326">Glycosidase</keyword>
<keyword id="KW-0378">Hydrolase</keyword>
<keyword id="KW-0573">Peptidoglycan synthesis</keyword>
<accession>Q669N5</accession>
<organism>
    <name type="scientific">Yersinia pseudotuberculosis serotype I (strain IP32953)</name>
    <dbReference type="NCBI Taxonomy" id="273123"/>
    <lineage>
        <taxon>Bacteria</taxon>
        <taxon>Pseudomonadati</taxon>
        <taxon>Pseudomonadota</taxon>
        <taxon>Gammaproteobacteria</taxon>
        <taxon>Enterobacterales</taxon>
        <taxon>Yersiniaceae</taxon>
        <taxon>Yersinia</taxon>
    </lineage>
</organism>
<evidence type="ECO:0000255" key="1">
    <source>
        <dbReference type="HAMAP-Rule" id="MF_00364"/>
    </source>
</evidence>
<gene>
    <name evidence="1" type="primary">nagZ</name>
    <name type="ordered locus">YPTB2449</name>
</gene>
<proteinExistence type="inferred from homology"/>
<sequence>MGPVMLDVASYELDAEEREILKHPLVGGLILFSRNFHDAEQLRELVRQIRAASHERLVVAVDQEGGRVQRFRDGFTRLPAAQSFAAINDAATAAQLAQEAGWLMAAEMMAMDIDISFAPVLDIGHVSAAIGERSFHSDPQQARIMAECFIRGMHSAGMKTTGKHFPGHGAVTADSHKETPHDNRPLAEILTHDMVIFRELIQRKLLDAIMPAHVIYTEADARPASGSAYWLQEILRQELGFEGIIFSDDLSMEGAAIMGSYAERGQASLDAGCDMILVCNNRQGAVSVLDNLSPIKADQLTRLYHSGQFDRQTLMASSRWQQANKALTALSERWDAHKQTLGQ</sequence>
<protein>
    <recommendedName>
        <fullName evidence="1">Beta-hexosaminidase</fullName>
        <ecNumber evidence="1">3.2.1.52</ecNumber>
    </recommendedName>
    <alternativeName>
        <fullName evidence="1">Beta-N-acetylhexosaminidase</fullName>
    </alternativeName>
    <alternativeName>
        <fullName evidence="1">N-acetyl-beta-glucosaminidase</fullName>
    </alternativeName>
</protein>
<comment type="function">
    <text evidence="1">Plays a role in peptidoglycan recycling by cleaving the terminal beta-1,4-linked N-acetylglucosamine (GlcNAc) from peptide-linked peptidoglycan fragments, giving rise to free GlcNAc, anhydro-N-acetylmuramic acid and anhydro-N-acetylmuramic acid-linked peptides.</text>
</comment>
<comment type="catalytic activity">
    <reaction evidence="1">
        <text>Hydrolysis of terminal non-reducing N-acetyl-D-hexosamine residues in N-acetyl-beta-D-hexosaminides.</text>
        <dbReference type="EC" id="3.2.1.52"/>
    </reaction>
</comment>
<comment type="pathway">
    <text evidence="1">Cell wall biogenesis; peptidoglycan recycling.</text>
</comment>
<comment type="subcellular location">
    <subcellularLocation>
        <location evidence="1">Cytoplasm</location>
    </subcellularLocation>
</comment>
<comment type="similarity">
    <text evidence="1">Belongs to the glycosyl hydrolase 3 family. NagZ subfamily.</text>
</comment>